<sequence length="148" mass="15716">MDVILLDKIGKLGNLGDQVAVKAGYGRNYLVPYGLAVPATKENVAAFEAQRAELEAQAAERKAEAEARAAQLSEIELSLVAKAGDEGKLFGSIGPRDLADALTQAGLDVVKSEVRMPEGPIRKTGEYDITLQLHAEVTSSVRIVVVAE</sequence>
<gene>
    <name evidence="1" type="primary">rplI</name>
    <name type="ordered locus">Csal_0891</name>
</gene>
<accession>Q1QZ60</accession>
<keyword id="KW-1185">Reference proteome</keyword>
<keyword id="KW-0687">Ribonucleoprotein</keyword>
<keyword id="KW-0689">Ribosomal protein</keyword>
<keyword id="KW-0694">RNA-binding</keyword>
<keyword id="KW-0699">rRNA-binding</keyword>
<feature type="chain" id="PRO_0000258447" description="Large ribosomal subunit protein bL9">
    <location>
        <begin position="1"/>
        <end position="148"/>
    </location>
</feature>
<reference key="1">
    <citation type="journal article" date="2011" name="Stand. Genomic Sci.">
        <title>Complete genome sequence of the halophilic and highly halotolerant Chromohalobacter salexigens type strain (1H11(T)).</title>
        <authorList>
            <person name="Copeland A."/>
            <person name="O'Connor K."/>
            <person name="Lucas S."/>
            <person name="Lapidus A."/>
            <person name="Berry K.W."/>
            <person name="Detter J.C."/>
            <person name="Del Rio T.G."/>
            <person name="Hammon N."/>
            <person name="Dalin E."/>
            <person name="Tice H."/>
            <person name="Pitluck S."/>
            <person name="Bruce D."/>
            <person name="Goodwin L."/>
            <person name="Han C."/>
            <person name="Tapia R."/>
            <person name="Saunders E."/>
            <person name="Schmutz J."/>
            <person name="Brettin T."/>
            <person name="Larimer F."/>
            <person name="Land M."/>
            <person name="Hauser L."/>
            <person name="Vargas C."/>
            <person name="Nieto J.J."/>
            <person name="Kyrpides N.C."/>
            <person name="Ivanova N."/>
            <person name="Goker M."/>
            <person name="Klenk H.P."/>
            <person name="Csonka L.N."/>
            <person name="Woyke T."/>
        </authorList>
    </citation>
    <scope>NUCLEOTIDE SEQUENCE [LARGE SCALE GENOMIC DNA]</scope>
    <source>
        <strain>ATCC BAA-138 / DSM 3043 / CIP 106854 / NCIMB 13768 / 1H11</strain>
    </source>
</reference>
<evidence type="ECO:0000255" key="1">
    <source>
        <dbReference type="HAMAP-Rule" id="MF_00503"/>
    </source>
</evidence>
<evidence type="ECO:0000305" key="2"/>
<organism>
    <name type="scientific">Chromohalobacter salexigens (strain ATCC BAA-138 / DSM 3043 / CIP 106854 / NCIMB 13768 / 1H11)</name>
    <dbReference type="NCBI Taxonomy" id="290398"/>
    <lineage>
        <taxon>Bacteria</taxon>
        <taxon>Pseudomonadati</taxon>
        <taxon>Pseudomonadota</taxon>
        <taxon>Gammaproteobacteria</taxon>
        <taxon>Oceanospirillales</taxon>
        <taxon>Halomonadaceae</taxon>
        <taxon>Chromohalobacter</taxon>
    </lineage>
</organism>
<protein>
    <recommendedName>
        <fullName evidence="1">Large ribosomal subunit protein bL9</fullName>
    </recommendedName>
    <alternativeName>
        <fullName evidence="2">50S ribosomal protein L9</fullName>
    </alternativeName>
</protein>
<name>RL9_CHRSD</name>
<proteinExistence type="inferred from homology"/>
<dbReference type="EMBL" id="CP000285">
    <property type="protein sequence ID" value="ABE58248.1"/>
    <property type="molecule type" value="Genomic_DNA"/>
</dbReference>
<dbReference type="RefSeq" id="WP_011506194.1">
    <property type="nucleotide sequence ID" value="NC_007963.1"/>
</dbReference>
<dbReference type="SMR" id="Q1QZ60"/>
<dbReference type="STRING" id="290398.Csal_0891"/>
<dbReference type="GeneID" id="95333648"/>
<dbReference type="KEGG" id="csa:Csal_0891"/>
<dbReference type="eggNOG" id="COG0359">
    <property type="taxonomic scope" value="Bacteria"/>
</dbReference>
<dbReference type="HOGENOM" id="CLU_078938_4_1_6"/>
<dbReference type="OrthoDB" id="9788336at2"/>
<dbReference type="Proteomes" id="UP000000239">
    <property type="component" value="Chromosome"/>
</dbReference>
<dbReference type="GO" id="GO:1990904">
    <property type="term" value="C:ribonucleoprotein complex"/>
    <property type="evidence" value="ECO:0007669"/>
    <property type="project" value="UniProtKB-KW"/>
</dbReference>
<dbReference type="GO" id="GO:0005840">
    <property type="term" value="C:ribosome"/>
    <property type="evidence" value="ECO:0007669"/>
    <property type="project" value="UniProtKB-KW"/>
</dbReference>
<dbReference type="GO" id="GO:0019843">
    <property type="term" value="F:rRNA binding"/>
    <property type="evidence" value="ECO:0007669"/>
    <property type="project" value="UniProtKB-UniRule"/>
</dbReference>
<dbReference type="GO" id="GO:0003735">
    <property type="term" value="F:structural constituent of ribosome"/>
    <property type="evidence" value="ECO:0007669"/>
    <property type="project" value="InterPro"/>
</dbReference>
<dbReference type="GO" id="GO:0006412">
    <property type="term" value="P:translation"/>
    <property type="evidence" value="ECO:0007669"/>
    <property type="project" value="UniProtKB-UniRule"/>
</dbReference>
<dbReference type="Gene3D" id="3.10.430.100">
    <property type="entry name" value="Ribosomal protein L9, C-terminal domain"/>
    <property type="match status" value="1"/>
</dbReference>
<dbReference type="Gene3D" id="3.40.5.10">
    <property type="entry name" value="Ribosomal protein L9, N-terminal domain"/>
    <property type="match status" value="1"/>
</dbReference>
<dbReference type="HAMAP" id="MF_00503">
    <property type="entry name" value="Ribosomal_bL9"/>
    <property type="match status" value="1"/>
</dbReference>
<dbReference type="InterPro" id="IPR000244">
    <property type="entry name" value="Ribosomal_bL9"/>
</dbReference>
<dbReference type="InterPro" id="IPR009027">
    <property type="entry name" value="Ribosomal_bL9/RNase_H1_N"/>
</dbReference>
<dbReference type="InterPro" id="IPR020594">
    <property type="entry name" value="Ribosomal_bL9_bac/chp"/>
</dbReference>
<dbReference type="InterPro" id="IPR020069">
    <property type="entry name" value="Ribosomal_bL9_C"/>
</dbReference>
<dbReference type="InterPro" id="IPR036791">
    <property type="entry name" value="Ribosomal_bL9_C_sf"/>
</dbReference>
<dbReference type="InterPro" id="IPR020070">
    <property type="entry name" value="Ribosomal_bL9_N"/>
</dbReference>
<dbReference type="InterPro" id="IPR036935">
    <property type="entry name" value="Ribosomal_bL9_N_sf"/>
</dbReference>
<dbReference type="NCBIfam" id="TIGR00158">
    <property type="entry name" value="L9"/>
    <property type="match status" value="1"/>
</dbReference>
<dbReference type="PANTHER" id="PTHR21368">
    <property type="entry name" value="50S RIBOSOMAL PROTEIN L9"/>
    <property type="match status" value="1"/>
</dbReference>
<dbReference type="Pfam" id="PF03948">
    <property type="entry name" value="Ribosomal_L9_C"/>
    <property type="match status" value="1"/>
</dbReference>
<dbReference type="Pfam" id="PF01281">
    <property type="entry name" value="Ribosomal_L9_N"/>
    <property type="match status" value="1"/>
</dbReference>
<dbReference type="SUPFAM" id="SSF55658">
    <property type="entry name" value="L9 N-domain-like"/>
    <property type="match status" value="1"/>
</dbReference>
<dbReference type="SUPFAM" id="SSF55653">
    <property type="entry name" value="Ribosomal protein L9 C-domain"/>
    <property type="match status" value="1"/>
</dbReference>
<dbReference type="PROSITE" id="PS00651">
    <property type="entry name" value="RIBOSOMAL_L9"/>
    <property type="match status" value="1"/>
</dbReference>
<comment type="function">
    <text evidence="1">Binds to the 23S rRNA.</text>
</comment>
<comment type="similarity">
    <text evidence="1">Belongs to the bacterial ribosomal protein bL9 family.</text>
</comment>